<gene>
    <name evidence="1" type="primary">aroD</name>
    <name type="ordered locus">SPP_1397</name>
</gene>
<proteinExistence type="inferred from homology"/>
<dbReference type="EC" id="4.2.1.10" evidence="1"/>
<dbReference type="EMBL" id="CP000920">
    <property type="protein sequence ID" value="ACO21246.1"/>
    <property type="molecule type" value="Genomic_DNA"/>
</dbReference>
<dbReference type="RefSeq" id="WP_000767772.1">
    <property type="nucleotide sequence ID" value="NC_012467.1"/>
</dbReference>
<dbReference type="SMR" id="C1CL86"/>
<dbReference type="KEGG" id="spp:SPP_1397"/>
<dbReference type="HOGENOM" id="CLU_064444_0_0_9"/>
<dbReference type="UniPathway" id="UPA00053">
    <property type="reaction ID" value="UER00086"/>
</dbReference>
<dbReference type="GO" id="GO:0003855">
    <property type="term" value="F:3-dehydroquinate dehydratase activity"/>
    <property type="evidence" value="ECO:0007669"/>
    <property type="project" value="UniProtKB-UniRule"/>
</dbReference>
<dbReference type="GO" id="GO:0046279">
    <property type="term" value="P:3,4-dihydroxybenzoate biosynthetic process"/>
    <property type="evidence" value="ECO:0007669"/>
    <property type="project" value="TreeGrafter"/>
</dbReference>
<dbReference type="GO" id="GO:0008652">
    <property type="term" value="P:amino acid biosynthetic process"/>
    <property type="evidence" value="ECO:0007669"/>
    <property type="project" value="UniProtKB-KW"/>
</dbReference>
<dbReference type="GO" id="GO:0009073">
    <property type="term" value="P:aromatic amino acid family biosynthetic process"/>
    <property type="evidence" value="ECO:0007669"/>
    <property type="project" value="UniProtKB-KW"/>
</dbReference>
<dbReference type="GO" id="GO:0009423">
    <property type="term" value="P:chorismate biosynthetic process"/>
    <property type="evidence" value="ECO:0007669"/>
    <property type="project" value="UniProtKB-UniRule"/>
</dbReference>
<dbReference type="CDD" id="cd00502">
    <property type="entry name" value="DHQase_I"/>
    <property type="match status" value="1"/>
</dbReference>
<dbReference type="FunFam" id="3.20.20.70:FF:000217">
    <property type="entry name" value="3-dehydroquinate dehydratase"/>
    <property type="match status" value="1"/>
</dbReference>
<dbReference type="Gene3D" id="3.20.20.70">
    <property type="entry name" value="Aldolase class I"/>
    <property type="match status" value="1"/>
</dbReference>
<dbReference type="HAMAP" id="MF_00214">
    <property type="entry name" value="AroD"/>
    <property type="match status" value="1"/>
</dbReference>
<dbReference type="InterPro" id="IPR013785">
    <property type="entry name" value="Aldolase_TIM"/>
</dbReference>
<dbReference type="InterPro" id="IPR001381">
    <property type="entry name" value="DHquinase_I"/>
</dbReference>
<dbReference type="InterPro" id="IPR050146">
    <property type="entry name" value="Type-I_3-dehydroquinase"/>
</dbReference>
<dbReference type="NCBIfam" id="TIGR01093">
    <property type="entry name" value="aroD"/>
    <property type="match status" value="1"/>
</dbReference>
<dbReference type="PANTHER" id="PTHR43699">
    <property type="entry name" value="3-DEHYDROQUINATE DEHYDRATASE"/>
    <property type="match status" value="1"/>
</dbReference>
<dbReference type="PANTHER" id="PTHR43699:SF1">
    <property type="entry name" value="3-DEHYDROQUINATE DEHYDRATASE"/>
    <property type="match status" value="1"/>
</dbReference>
<dbReference type="Pfam" id="PF01487">
    <property type="entry name" value="DHquinase_I"/>
    <property type="match status" value="1"/>
</dbReference>
<dbReference type="SUPFAM" id="SSF51569">
    <property type="entry name" value="Aldolase"/>
    <property type="match status" value="1"/>
</dbReference>
<name>AROD_STRZP</name>
<feature type="chain" id="PRO_1000124790" description="3-dehydroquinate dehydratase">
    <location>
        <begin position="1"/>
        <end position="225"/>
    </location>
</feature>
<feature type="active site" description="Proton donor/acceptor" evidence="1">
    <location>
        <position position="118"/>
    </location>
</feature>
<feature type="active site" description="Schiff-base intermediate with substrate" evidence="1">
    <location>
        <position position="143"/>
    </location>
</feature>
<feature type="binding site" evidence="1">
    <location>
        <position position="6"/>
    </location>
    <ligand>
        <name>3-dehydroquinate</name>
        <dbReference type="ChEBI" id="CHEBI:32364"/>
    </ligand>
</feature>
<feature type="binding site" evidence="1">
    <location>
        <begin position="30"/>
        <end position="32"/>
    </location>
    <ligand>
        <name>3-dehydroquinate</name>
        <dbReference type="ChEBI" id="CHEBI:32364"/>
    </ligand>
</feature>
<feature type="binding site" evidence="1">
    <location>
        <position position="62"/>
    </location>
    <ligand>
        <name>3-dehydroquinate</name>
        <dbReference type="ChEBI" id="CHEBI:32364"/>
    </ligand>
</feature>
<feature type="binding site" evidence="1">
    <location>
        <position position="186"/>
    </location>
    <ligand>
        <name>3-dehydroquinate</name>
        <dbReference type="ChEBI" id="CHEBI:32364"/>
    </ligand>
</feature>
<feature type="binding site" evidence="1">
    <location>
        <position position="205"/>
    </location>
    <ligand>
        <name>3-dehydroquinate</name>
        <dbReference type="ChEBI" id="CHEBI:32364"/>
    </ligand>
</feature>
<feature type="binding site" evidence="1">
    <location>
        <position position="209"/>
    </location>
    <ligand>
        <name>3-dehydroquinate</name>
        <dbReference type="ChEBI" id="CHEBI:32364"/>
    </ligand>
</feature>
<comment type="function">
    <text evidence="1">Involved in the third step of the chorismate pathway, which leads to the biosynthesis of aromatic amino acids. Catalyzes the cis-dehydration of 3-dehydroquinate (DHQ) and introduces the first double bond of the aromatic ring to yield 3-dehydroshikimate.</text>
</comment>
<comment type="catalytic activity">
    <reaction evidence="1">
        <text>3-dehydroquinate = 3-dehydroshikimate + H2O</text>
        <dbReference type="Rhea" id="RHEA:21096"/>
        <dbReference type="ChEBI" id="CHEBI:15377"/>
        <dbReference type="ChEBI" id="CHEBI:16630"/>
        <dbReference type="ChEBI" id="CHEBI:32364"/>
        <dbReference type="EC" id="4.2.1.10"/>
    </reaction>
</comment>
<comment type="pathway">
    <text evidence="1">Metabolic intermediate biosynthesis; chorismate biosynthesis; chorismate from D-erythrose 4-phosphate and phosphoenolpyruvate: step 3/7.</text>
</comment>
<comment type="subunit">
    <text evidence="1">Homodimer.</text>
</comment>
<comment type="similarity">
    <text evidence="1">Belongs to the type-I 3-dehydroquinase family.</text>
</comment>
<accession>C1CL86</accession>
<keyword id="KW-0028">Amino-acid biosynthesis</keyword>
<keyword id="KW-0057">Aromatic amino acid biosynthesis</keyword>
<keyword id="KW-0456">Lyase</keyword>
<keyword id="KW-0704">Schiff base</keyword>
<sequence>MKLIVSVMPRSLEEAQALDDTRYLDADIIEWRADYLPKEAILQVAPAIFEKFAGRELVFTLRTRSEGGEIDLSPEEYIHLIKEVAQLYQPDYIDFEYYSYKDVFEEMLDFPNLVLSYHNFQETPENMMEILSELTILNPKLVKVAVMAHTEQDVLDLMNYTRGFKTLNPEQEYVTISMGKVGKVSRITADVTGSSWSFASLDEVSAPGQISLASMKKIREILDEA</sequence>
<organism>
    <name type="scientific">Streptococcus pneumoniae (strain P1031)</name>
    <dbReference type="NCBI Taxonomy" id="488223"/>
    <lineage>
        <taxon>Bacteria</taxon>
        <taxon>Bacillati</taxon>
        <taxon>Bacillota</taxon>
        <taxon>Bacilli</taxon>
        <taxon>Lactobacillales</taxon>
        <taxon>Streptococcaceae</taxon>
        <taxon>Streptococcus</taxon>
    </lineage>
</organism>
<protein>
    <recommendedName>
        <fullName evidence="1">3-dehydroquinate dehydratase</fullName>
        <shortName evidence="1">3-dehydroquinase</shortName>
        <ecNumber evidence="1">4.2.1.10</ecNumber>
    </recommendedName>
    <alternativeName>
        <fullName evidence="1">Type I DHQase</fullName>
    </alternativeName>
    <alternativeName>
        <fullName evidence="1">Type I dehydroquinase</fullName>
        <shortName evidence="1">DHQ1</shortName>
    </alternativeName>
</protein>
<reference key="1">
    <citation type="journal article" date="2010" name="Genome Biol.">
        <title>Structure and dynamics of the pan-genome of Streptococcus pneumoniae and closely related species.</title>
        <authorList>
            <person name="Donati C."/>
            <person name="Hiller N.L."/>
            <person name="Tettelin H."/>
            <person name="Muzzi A."/>
            <person name="Croucher N.J."/>
            <person name="Angiuoli S.V."/>
            <person name="Oggioni M."/>
            <person name="Dunning Hotopp J.C."/>
            <person name="Hu F.Z."/>
            <person name="Riley D.R."/>
            <person name="Covacci A."/>
            <person name="Mitchell T.J."/>
            <person name="Bentley S.D."/>
            <person name="Kilian M."/>
            <person name="Ehrlich G.D."/>
            <person name="Rappuoli R."/>
            <person name="Moxon E.R."/>
            <person name="Masignani V."/>
        </authorList>
    </citation>
    <scope>NUCLEOTIDE SEQUENCE [LARGE SCALE GENOMIC DNA]</scope>
    <source>
        <strain>P1031</strain>
    </source>
</reference>
<evidence type="ECO:0000255" key="1">
    <source>
        <dbReference type="HAMAP-Rule" id="MF_00214"/>
    </source>
</evidence>